<comment type="function">
    <text evidence="1">Component of the A-type ATP synthase that produces ATP from ADP in the presence of a proton gradient across the membrane.</text>
</comment>
<comment type="subunit">
    <text evidence="1">Has multiple subunits with at least A(3), B(3), C, D, E, F, H, I and proteolipid K(x).</text>
</comment>
<comment type="subcellular location">
    <subcellularLocation>
        <location evidence="1">Cell membrane</location>
        <topology evidence="1">Peripheral membrane protein</topology>
    </subcellularLocation>
</comment>
<comment type="similarity">
    <text evidence="1">Belongs to the V-ATPase D subunit family.</text>
</comment>
<keyword id="KW-0066">ATP synthesis</keyword>
<keyword id="KW-1003">Cell membrane</keyword>
<keyword id="KW-0375">Hydrogen ion transport</keyword>
<keyword id="KW-0406">Ion transport</keyword>
<keyword id="KW-0472">Membrane</keyword>
<keyword id="KW-1185">Reference proteome</keyword>
<keyword id="KW-0813">Transport</keyword>
<reference key="1">
    <citation type="journal article" date="2000" name="Proc. Natl. Acad. Sci. U.S.A.">
        <title>Genome sequence of Halobacterium species NRC-1.</title>
        <authorList>
            <person name="Ng W.V."/>
            <person name="Kennedy S.P."/>
            <person name="Mahairas G.G."/>
            <person name="Berquist B."/>
            <person name="Pan M."/>
            <person name="Shukla H.D."/>
            <person name="Lasky S.R."/>
            <person name="Baliga N.S."/>
            <person name="Thorsson V."/>
            <person name="Sbrogna J."/>
            <person name="Swartzell S."/>
            <person name="Weir D."/>
            <person name="Hall J."/>
            <person name="Dahl T.A."/>
            <person name="Welti R."/>
            <person name="Goo Y.A."/>
            <person name="Leithauser B."/>
            <person name="Keller K."/>
            <person name="Cruz R."/>
            <person name="Danson M.J."/>
            <person name="Hough D.W."/>
            <person name="Maddocks D.G."/>
            <person name="Jablonski P.E."/>
            <person name="Krebs M.P."/>
            <person name="Angevine C.M."/>
            <person name="Dale H."/>
            <person name="Isenbarger T.A."/>
            <person name="Peck R.F."/>
            <person name="Pohlschroder M."/>
            <person name="Spudich J.L."/>
            <person name="Jung K.-H."/>
            <person name="Alam M."/>
            <person name="Freitas T."/>
            <person name="Hou S."/>
            <person name="Daniels C.J."/>
            <person name="Dennis P.P."/>
            <person name="Omer A.D."/>
            <person name="Ebhardt H."/>
            <person name="Lowe T.M."/>
            <person name="Liang P."/>
            <person name="Riley M."/>
            <person name="Hood L."/>
            <person name="DasSarma S."/>
        </authorList>
    </citation>
    <scope>NUCLEOTIDE SEQUENCE [LARGE SCALE GENOMIC DNA]</scope>
    <source>
        <strain>ATCC 700922 / JCM 11081 / NRC-1</strain>
    </source>
</reference>
<feature type="chain" id="PRO_0000144248" description="A-type ATP synthase subunit D">
    <location>
        <begin position="1"/>
        <end position="224"/>
    </location>
</feature>
<feature type="region of interest" description="Disordered" evidence="2">
    <location>
        <begin position="200"/>
        <end position="224"/>
    </location>
</feature>
<feature type="compositionally biased region" description="Basic and acidic residues" evidence="2">
    <location>
        <begin position="200"/>
        <end position="209"/>
    </location>
</feature>
<feature type="compositionally biased region" description="Low complexity" evidence="2">
    <location>
        <begin position="215"/>
        <end position="224"/>
    </location>
</feature>
<organism>
    <name type="scientific">Halobacterium salinarum (strain ATCC 700922 / JCM 11081 / NRC-1)</name>
    <name type="common">Halobacterium halobium</name>
    <dbReference type="NCBI Taxonomy" id="64091"/>
    <lineage>
        <taxon>Archaea</taxon>
        <taxon>Methanobacteriati</taxon>
        <taxon>Methanobacteriota</taxon>
        <taxon>Stenosarchaea group</taxon>
        <taxon>Halobacteria</taxon>
        <taxon>Halobacteriales</taxon>
        <taxon>Halobacteriaceae</taxon>
        <taxon>Halobacterium</taxon>
        <taxon>Halobacterium salinarum NRC-34001</taxon>
    </lineage>
</organism>
<protein>
    <recommendedName>
        <fullName evidence="1">A-type ATP synthase subunit D</fullName>
    </recommendedName>
</protein>
<name>AATD_HALSA</name>
<gene>
    <name evidence="1" type="primary">atpD</name>
    <name type="ordered locus">VNG_2135G</name>
</gene>
<proteinExistence type="inferred from homology"/>
<accession>Q9HNE7</accession>
<evidence type="ECO:0000255" key="1">
    <source>
        <dbReference type="HAMAP-Rule" id="MF_00271"/>
    </source>
</evidence>
<evidence type="ECO:0000256" key="2">
    <source>
        <dbReference type="SAM" id="MobiDB-lite"/>
    </source>
</evidence>
<sequence>MAQDIKPTRKNLMEIEDRIDLSERGHDTLEQKRDGLIMEFMDILDQSQDVRSGLEGDYETAQQKINMARAMEGDVAVSGAAAALEEYPEITVESMNIMGVVVPQIESTKVKKSFDKRGYGILGTSARIDEAADAYEELLESIVLAAEVETAMKKMLTEIETTKRRVNALEFKLLPELHEGKEYIDQKLEEKEREEMFRMKKVKDKKEAQEEAADEAAAAESTGA</sequence>
<dbReference type="EMBL" id="AE004437">
    <property type="protein sequence ID" value="AAG20273.1"/>
    <property type="molecule type" value="Genomic_DNA"/>
</dbReference>
<dbReference type="PIR" id="E84363">
    <property type="entry name" value="E84363"/>
</dbReference>
<dbReference type="RefSeq" id="WP_010903575.1">
    <property type="nucleotide sequence ID" value="NC_002607.1"/>
</dbReference>
<dbReference type="SMR" id="Q9HNE7"/>
<dbReference type="FunCoup" id="Q9HNE7">
    <property type="interactions" value="98"/>
</dbReference>
<dbReference type="STRING" id="64091.VNG_2135G"/>
<dbReference type="PaxDb" id="64091-VNG_2135G"/>
<dbReference type="KEGG" id="hal:VNG_2135G"/>
<dbReference type="PATRIC" id="fig|64091.14.peg.1632"/>
<dbReference type="HOGENOM" id="CLU_069688_2_1_2"/>
<dbReference type="InParanoid" id="Q9HNE7"/>
<dbReference type="OrthoDB" id="117390at2157"/>
<dbReference type="PhylomeDB" id="Q9HNE7"/>
<dbReference type="Proteomes" id="UP000000554">
    <property type="component" value="Chromosome"/>
</dbReference>
<dbReference type="GO" id="GO:0005886">
    <property type="term" value="C:plasma membrane"/>
    <property type="evidence" value="ECO:0007669"/>
    <property type="project" value="UniProtKB-SubCell"/>
</dbReference>
<dbReference type="GO" id="GO:0033176">
    <property type="term" value="C:proton-transporting V-type ATPase complex"/>
    <property type="evidence" value="ECO:0000318"/>
    <property type="project" value="GO_Central"/>
</dbReference>
<dbReference type="GO" id="GO:0005524">
    <property type="term" value="F:ATP binding"/>
    <property type="evidence" value="ECO:0007669"/>
    <property type="project" value="UniProtKB-UniRule"/>
</dbReference>
<dbReference type="GO" id="GO:0046933">
    <property type="term" value="F:proton-transporting ATP synthase activity, rotational mechanism"/>
    <property type="evidence" value="ECO:0007669"/>
    <property type="project" value="UniProtKB-UniRule"/>
</dbReference>
<dbReference type="GO" id="GO:0046961">
    <property type="term" value="F:proton-transporting ATPase activity, rotational mechanism"/>
    <property type="evidence" value="ECO:0007669"/>
    <property type="project" value="InterPro"/>
</dbReference>
<dbReference type="GO" id="GO:0042777">
    <property type="term" value="P:proton motive force-driven plasma membrane ATP synthesis"/>
    <property type="evidence" value="ECO:0007669"/>
    <property type="project" value="UniProtKB-UniRule"/>
</dbReference>
<dbReference type="FunFam" id="1.10.287.3240:FF:000007">
    <property type="entry name" value="V-type ATP synthase subunit D"/>
    <property type="match status" value="1"/>
</dbReference>
<dbReference type="Gene3D" id="1.10.287.3240">
    <property type="match status" value="1"/>
</dbReference>
<dbReference type="HAMAP" id="MF_00271">
    <property type="entry name" value="ATP_synth_D_arch"/>
    <property type="match status" value="1"/>
</dbReference>
<dbReference type="InterPro" id="IPR002699">
    <property type="entry name" value="V_ATPase_D"/>
</dbReference>
<dbReference type="NCBIfam" id="NF001542">
    <property type="entry name" value="PRK00373.1-1"/>
    <property type="match status" value="1"/>
</dbReference>
<dbReference type="NCBIfam" id="TIGR00309">
    <property type="entry name" value="V_ATPase_subD"/>
    <property type="match status" value="1"/>
</dbReference>
<dbReference type="PANTHER" id="PTHR11671">
    <property type="entry name" value="V-TYPE ATP SYNTHASE SUBUNIT D"/>
    <property type="match status" value="1"/>
</dbReference>
<dbReference type="Pfam" id="PF01813">
    <property type="entry name" value="ATP-synt_D"/>
    <property type="match status" value="1"/>
</dbReference>